<protein>
    <recommendedName>
        <fullName evidence="1">DNA mismatch repair protein MutS</fullName>
    </recommendedName>
</protein>
<comment type="function">
    <text evidence="1">This protein is involved in the repair of mismatches in DNA. It is possible that it carries out the mismatch recognition step. This protein has a weak ATPase activity.</text>
</comment>
<comment type="similarity">
    <text evidence="1">Belongs to the DNA mismatch repair MutS family.</text>
</comment>
<organism>
    <name type="scientific">Rickettsia bellii (strain OSU 85-389)</name>
    <dbReference type="NCBI Taxonomy" id="391896"/>
    <lineage>
        <taxon>Bacteria</taxon>
        <taxon>Pseudomonadati</taxon>
        <taxon>Pseudomonadota</taxon>
        <taxon>Alphaproteobacteria</taxon>
        <taxon>Rickettsiales</taxon>
        <taxon>Rickettsiaceae</taxon>
        <taxon>Rickettsieae</taxon>
        <taxon>Rickettsia</taxon>
        <taxon>belli group</taxon>
    </lineage>
</organism>
<accession>A8GX86</accession>
<proteinExistence type="inferred from homology"/>
<evidence type="ECO:0000255" key="1">
    <source>
        <dbReference type="HAMAP-Rule" id="MF_00096"/>
    </source>
</evidence>
<sequence>MNFQEFKHKYGYDAATKMMQQYLDIKFAHLDCLLLFRMGDFYEMFYEDAVLASGVLGIALTKRGKNGDEEVPMCGVPYHALENYLTKLIEENYKVAICDQLETPEEAKNRGGYKAVVNRNVTRIITPGTVIEENLITTAEPNYLASLVVPKNKDTAALCYADLSTSTIFVVNVPELEILNELARLKPREILLSEHLRSSDLASNISKQLNFRITYQVDSFFAVNKCEKIILDFYKMKDIKGVGEISNSQICAIGSILEYLTLTQKENIPNLPKPKIIDFHSYMTIDFSTRRNLEIVTNSCGGNKGSLLSTLNHTVTKQGGRLLYNFLSSPLTDTHKINQRLNITEFFHSNLDITAKVRELLKKTSDIERCLTRITMNRGSGRDLLSIKYTLETANSIKEIFFDNYGFELPSFIEKIVKPLIRNDELYNLIEESICEDAPNNLNDGGVIKHSYHPKVLQLHDLINNGKLHIEKLKDQYKKETGIDSLKISHNNVIGLFIDITAKNANKINDPKFIHRQTTVNSVRYTTAELQKLESDLVNAKTLVVSLEKELYEDICKRVTKQSDYLRILASSLSGIDVFCNFAYIASENDYTRPEFTDDLSFDIVKGRHPVVEEALNKERKSFVHNDCHLSEAERIWLITGPNMAGKSTFMRQNAIIAIIAQIGSFVPAKSARIGMVDKIFSRIGAADDLIKGQSTFMAEMLETSAILAQSTKNSLIILDEVGRGTSTYDGVSIAWSVLEYIHDKLKCRCLFATHYHELTIMDNFLPAMQNYTIAIEESGKDILFLHNIIAGAADRSYGIHVAALAGLPASVINRAEQILLKFEKNAAGKGKNILSTESNNLSLFAIESPKLQNSKLEEKFKTIDPDKLSPKEALELLYQLKSNFIKQ</sequence>
<feature type="chain" id="PRO_1000008086" description="DNA mismatch repair protein MutS">
    <location>
        <begin position="1"/>
        <end position="888"/>
    </location>
</feature>
<feature type="binding site" evidence="1">
    <location>
        <begin position="641"/>
        <end position="648"/>
    </location>
    <ligand>
        <name>ATP</name>
        <dbReference type="ChEBI" id="CHEBI:30616"/>
    </ligand>
</feature>
<gene>
    <name evidence="1" type="primary">mutS</name>
    <name type="ordered locus">A1I_05820</name>
</gene>
<reference key="1">
    <citation type="submission" date="2007-09" db="EMBL/GenBank/DDBJ databases">
        <title>Complete genome sequencing of Rickettsia bellii.</title>
        <authorList>
            <person name="Madan A."/>
            <person name="Lee H."/>
            <person name="Madan A."/>
            <person name="Yoon J.-G."/>
            <person name="Ryu G.-Y."/>
            <person name="Dasch G."/>
            <person name="Ereemeva M."/>
        </authorList>
    </citation>
    <scope>NUCLEOTIDE SEQUENCE [LARGE SCALE GENOMIC DNA]</scope>
    <source>
        <strain>OSU 85-389</strain>
    </source>
</reference>
<dbReference type="EMBL" id="CP000849">
    <property type="protein sequence ID" value="ABV79486.1"/>
    <property type="molecule type" value="Genomic_DNA"/>
</dbReference>
<dbReference type="RefSeq" id="WP_012152067.1">
    <property type="nucleotide sequence ID" value="NC_009883.1"/>
</dbReference>
<dbReference type="SMR" id="A8GX86"/>
<dbReference type="KEGG" id="rbo:A1I_05820"/>
<dbReference type="HOGENOM" id="CLU_002472_4_0_5"/>
<dbReference type="GO" id="GO:0005524">
    <property type="term" value="F:ATP binding"/>
    <property type="evidence" value="ECO:0007669"/>
    <property type="project" value="UniProtKB-UniRule"/>
</dbReference>
<dbReference type="GO" id="GO:0140664">
    <property type="term" value="F:ATP-dependent DNA damage sensor activity"/>
    <property type="evidence" value="ECO:0007669"/>
    <property type="project" value="InterPro"/>
</dbReference>
<dbReference type="GO" id="GO:0003684">
    <property type="term" value="F:damaged DNA binding"/>
    <property type="evidence" value="ECO:0007669"/>
    <property type="project" value="UniProtKB-UniRule"/>
</dbReference>
<dbReference type="GO" id="GO:0030983">
    <property type="term" value="F:mismatched DNA binding"/>
    <property type="evidence" value="ECO:0007669"/>
    <property type="project" value="InterPro"/>
</dbReference>
<dbReference type="GO" id="GO:0006298">
    <property type="term" value="P:mismatch repair"/>
    <property type="evidence" value="ECO:0007669"/>
    <property type="project" value="UniProtKB-UniRule"/>
</dbReference>
<dbReference type="CDD" id="cd03284">
    <property type="entry name" value="ABC_MutS1"/>
    <property type="match status" value="1"/>
</dbReference>
<dbReference type="FunFam" id="3.40.1170.10:FF:000001">
    <property type="entry name" value="DNA mismatch repair protein MutS"/>
    <property type="match status" value="1"/>
</dbReference>
<dbReference type="FunFam" id="3.40.50.300:FF:000870">
    <property type="entry name" value="MutS protein homolog 4"/>
    <property type="match status" value="1"/>
</dbReference>
<dbReference type="Gene3D" id="1.10.1420.10">
    <property type="match status" value="2"/>
</dbReference>
<dbReference type="Gene3D" id="6.10.140.430">
    <property type="match status" value="1"/>
</dbReference>
<dbReference type="Gene3D" id="3.40.1170.10">
    <property type="entry name" value="DNA repair protein MutS, domain I"/>
    <property type="match status" value="1"/>
</dbReference>
<dbReference type="Gene3D" id="3.30.420.110">
    <property type="entry name" value="MutS, connector domain"/>
    <property type="match status" value="1"/>
</dbReference>
<dbReference type="Gene3D" id="3.40.50.300">
    <property type="entry name" value="P-loop containing nucleotide triphosphate hydrolases"/>
    <property type="match status" value="1"/>
</dbReference>
<dbReference type="HAMAP" id="MF_00096">
    <property type="entry name" value="MutS"/>
    <property type="match status" value="1"/>
</dbReference>
<dbReference type="InterPro" id="IPR005748">
    <property type="entry name" value="DNA_mismatch_repair_MutS"/>
</dbReference>
<dbReference type="InterPro" id="IPR007695">
    <property type="entry name" value="DNA_mismatch_repair_MutS-lik_N"/>
</dbReference>
<dbReference type="InterPro" id="IPR017261">
    <property type="entry name" value="DNA_mismatch_repair_MutS/MSH"/>
</dbReference>
<dbReference type="InterPro" id="IPR000432">
    <property type="entry name" value="DNA_mismatch_repair_MutS_C"/>
</dbReference>
<dbReference type="InterPro" id="IPR007861">
    <property type="entry name" value="DNA_mismatch_repair_MutS_clamp"/>
</dbReference>
<dbReference type="InterPro" id="IPR007696">
    <property type="entry name" value="DNA_mismatch_repair_MutS_core"/>
</dbReference>
<dbReference type="InterPro" id="IPR016151">
    <property type="entry name" value="DNA_mismatch_repair_MutS_N"/>
</dbReference>
<dbReference type="InterPro" id="IPR036187">
    <property type="entry name" value="DNA_mismatch_repair_MutS_sf"/>
</dbReference>
<dbReference type="InterPro" id="IPR007860">
    <property type="entry name" value="DNA_mmatch_repair_MutS_con_dom"/>
</dbReference>
<dbReference type="InterPro" id="IPR045076">
    <property type="entry name" value="MutS"/>
</dbReference>
<dbReference type="InterPro" id="IPR036678">
    <property type="entry name" value="MutS_con_dom_sf"/>
</dbReference>
<dbReference type="InterPro" id="IPR027417">
    <property type="entry name" value="P-loop_NTPase"/>
</dbReference>
<dbReference type="NCBIfam" id="TIGR01070">
    <property type="entry name" value="mutS1"/>
    <property type="match status" value="1"/>
</dbReference>
<dbReference type="NCBIfam" id="NF003810">
    <property type="entry name" value="PRK05399.1"/>
    <property type="match status" value="1"/>
</dbReference>
<dbReference type="PANTHER" id="PTHR11361:SF34">
    <property type="entry name" value="DNA MISMATCH REPAIR PROTEIN MSH1, MITOCHONDRIAL"/>
    <property type="match status" value="1"/>
</dbReference>
<dbReference type="PANTHER" id="PTHR11361">
    <property type="entry name" value="DNA MISMATCH REPAIR PROTEIN MUTS FAMILY MEMBER"/>
    <property type="match status" value="1"/>
</dbReference>
<dbReference type="Pfam" id="PF01624">
    <property type="entry name" value="MutS_I"/>
    <property type="match status" value="1"/>
</dbReference>
<dbReference type="Pfam" id="PF05188">
    <property type="entry name" value="MutS_II"/>
    <property type="match status" value="1"/>
</dbReference>
<dbReference type="Pfam" id="PF05192">
    <property type="entry name" value="MutS_III"/>
    <property type="match status" value="1"/>
</dbReference>
<dbReference type="Pfam" id="PF05190">
    <property type="entry name" value="MutS_IV"/>
    <property type="match status" value="1"/>
</dbReference>
<dbReference type="Pfam" id="PF00488">
    <property type="entry name" value="MutS_V"/>
    <property type="match status" value="1"/>
</dbReference>
<dbReference type="PIRSF" id="PIRSF037677">
    <property type="entry name" value="DNA_mis_repair_Msh6"/>
    <property type="match status" value="1"/>
</dbReference>
<dbReference type="SMART" id="SM00534">
    <property type="entry name" value="MUTSac"/>
    <property type="match status" value="1"/>
</dbReference>
<dbReference type="SMART" id="SM00533">
    <property type="entry name" value="MUTSd"/>
    <property type="match status" value="1"/>
</dbReference>
<dbReference type="SUPFAM" id="SSF55271">
    <property type="entry name" value="DNA repair protein MutS, domain I"/>
    <property type="match status" value="1"/>
</dbReference>
<dbReference type="SUPFAM" id="SSF53150">
    <property type="entry name" value="DNA repair protein MutS, domain II"/>
    <property type="match status" value="1"/>
</dbReference>
<dbReference type="SUPFAM" id="SSF48334">
    <property type="entry name" value="DNA repair protein MutS, domain III"/>
    <property type="match status" value="1"/>
</dbReference>
<dbReference type="SUPFAM" id="SSF52540">
    <property type="entry name" value="P-loop containing nucleoside triphosphate hydrolases"/>
    <property type="match status" value="1"/>
</dbReference>
<dbReference type="PROSITE" id="PS00486">
    <property type="entry name" value="DNA_MISMATCH_REPAIR_2"/>
    <property type="match status" value="1"/>
</dbReference>
<name>MUTS_RICB8</name>
<keyword id="KW-0067">ATP-binding</keyword>
<keyword id="KW-0227">DNA damage</keyword>
<keyword id="KW-0234">DNA repair</keyword>
<keyword id="KW-0238">DNA-binding</keyword>
<keyword id="KW-0547">Nucleotide-binding</keyword>